<dbReference type="EC" id="2.3.1.234" evidence="1"/>
<dbReference type="EMBL" id="AL590451">
    <property type="protein sequence ID" value="CAD26985.1"/>
    <property type="molecule type" value="Genomic_DNA"/>
</dbReference>
<dbReference type="RefSeq" id="XP_955566.1">
    <property type="nucleotide sequence ID" value="XM_950473.1"/>
</dbReference>
<dbReference type="SMR" id="Q8SQQ3"/>
<dbReference type="FunCoup" id="Q8SQQ3">
    <property type="interactions" value="70"/>
</dbReference>
<dbReference type="STRING" id="284813.Q8SQQ3"/>
<dbReference type="VEuPathDB" id="MicrosporidiaDB:ECU09_0140"/>
<dbReference type="HOGENOM" id="CLU_023208_2_2_1"/>
<dbReference type="InParanoid" id="Q8SQQ3"/>
<dbReference type="OMA" id="HHRSWVV"/>
<dbReference type="OrthoDB" id="10254073at2759"/>
<dbReference type="Proteomes" id="UP000000819">
    <property type="component" value="Chromosome IX"/>
</dbReference>
<dbReference type="GO" id="GO:0005737">
    <property type="term" value="C:cytoplasm"/>
    <property type="evidence" value="ECO:0007669"/>
    <property type="project" value="UniProtKB-SubCell"/>
</dbReference>
<dbReference type="GO" id="GO:0000408">
    <property type="term" value="C:EKC/KEOPS complex"/>
    <property type="evidence" value="ECO:0007669"/>
    <property type="project" value="InterPro"/>
</dbReference>
<dbReference type="GO" id="GO:0005634">
    <property type="term" value="C:nucleus"/>
    <property type="evidence" value="ECO:0007669"/>
    <property type="project" value="UniProtKB-SubCell"/>
</dbReference>
<dbReference type="GO" id="GO:0046872">
    <property type="term" value="F:metal ion binding"/>
    <property type="evidence" value="ECO:0007669"/>
    <property type="project" value="UniProtKB-KW"/>
</dbReference>
<dbReference type="GO" id="GO:0061711">
    <property type="term" value="F:N(6)-L-threonylcarbamoyladenine synthase activity"/>
    <property type="evidence" value="ECO:0007669"/>
    <property type="project" value="UniProtKB-EC"/>
</dbReference>
<dbReference type="GO" id="GO:0002949">
    <property type="term" value="P:tRNA threonylcarbamoyladenosine modification"/>
    <property type="evidence" value="ECO:0007669"/>
    <property type="project" value="UniProtKB-UniRule"/>
</dbReference>
<dbReference type="CDD" id="cd24132">
    <property type="entry name" value="ASKHA_NBD_OSGEP_like_euk"/>
    <property type="match status" value="1"/>
</dbReference>
<dbReference type="FunFam" id="3.30.420.40:FF:000038">
    <property type="entry name" value="Probable tRNA N6-adenosine threonylcarbamoyltransferase"/>
    <property type="match status" value="1"/>
</dbReference>
<dbReference type="Gene3D" id="3.30.420.40">
    <property type="match status" value="2"/>
</dbReference>
<dbReference type="HAMAP" id="MF_01446">
    <property type="entry name" value="Kae1"/>
    <property type="match status" value="1"/>
</dbReference>
<dbReference type="InterPro" id="IPR043129">
    <property type="entry name" value="ATPase_NBD"/>
</dbReference>
<dbReference type="InterPro" id="IPR000905">
    <property type="entry name" value="Gcp-like_dom"/>
</dbReference>
<dbReference type="InterPro" id="IPR017861">
    <property type="entry name" value="KAE1/TsaD"/>
</dbReference>
<dbReference type="InterPro" id="IPR034680">
    <property type="entry name" value="Kae1_archaea_euk"/>
</dbReference>
<dbReference type="NCBIfam" id="TIGR03722">
    <property type="entry name" value="arch_KAE1"/>
    <property type="match status" value="1"/>
</dbReference>
<dbReference type="NCBIfam" id="TIGR00329">
    <property type="entry name" value="gcp_kae1"/>
    <property type="match status" value="1"/>
</dbReference>
<dbReference type="PANTHER" id="PTHR11735">
    <property type="entry name" value="TRNA N6-ADENOSINE THREONYLCARBAMOYLTRANSFERASE"/>
    <property type="match status" value="1"/>
</dbReference>
<dbReference type="PANTHER" id="PTHR11735:SF14">
    <property type="entry name" value="TRNA N6-ADENOSINE THREONYLCARBAMOYLTRANSFERASE"/>
    <property type="match status" value="1"/>
</dbReference>
<dbReference type="Pfam" id="PF00814">
    <property type="entry name" value="TsaD"/>
    <property type="match status" value="1"/>
</dbReference>
<dbReference type="PRINTS" id="PR00789">
    <property type="entry name" value="OSIALOPTASE"/>
</dbReference>
<dbReference type="SUPFAM" id="SSF53067">
    <property type="entry name" value="Actin-like ATPase domain"/>
    <property type="match status" value="1"/>
</dbReference>
<sequence length="331" mass="36400">MIAMGLEGSANKLGVGIMRDDEILANERLTYAPPPGEGFIPVKTAEHHRSRILGLVAVSLEKAGVDLDDVDIFCYTKGPGMGLPLSVVATVARTLSLYCNKPLVPVNHCIAHIEMGRFITKASNPVILYASGGNTQIIAYHNRRYKIFGETLDIAVGNCIDRFARALKLPNFPAPGLSVERYAKLGKNYIELPYVVKGMDVSFSGILSNIKRKIAEDEQVKRDLCYSLQETVFSALVEVTERAMAFSSSKEVLIVGGVGCNLRLQEMMGIMARERGGVCYATDERFCIDNGVMIAYVGMLMAKSGAAFKLGECFVTQRYRTDSVEVTWRDY</sequence>
<comment type="function">
    <text evidence="1">Component of the EKC/KEOPS complex that is required for the formation of a threonylcarbamoyl group on adenosine at position 37 (t(6)A37) in tRNAs that read codons beginning with adenine. The complex is probably involved in the transfer of the threonylcarbamoyl moiety of threonylcarbamoyl-AMP (TC-AMP) to the N6 group of A37. KAE1 likely plays a direct catalytic role in this reaction, but requires other protein(s) of the complex to fulfill this activity. The EKC/KEOPS complex also promotes both telomere uncapping and telomere elongation. The complex is required for efficient recruitment of transcriptional coactivators.</text>
</comment>
<comment type="catalytic activity">
    <reaction evidence="1">
        <text>L-threonylcarbamoyladenylate + adenosine(37) in tRNA = N(6)-L-threonylcarbamoyladenosine(37) in tRNA + AMP + H(+)</text>
        <dbReference type="Rhea" id="RHEA:37059"/>
        <dbReference type="Rhea" id="RHEA-COMP:10162"/>
        <dbReference type="Rhea" id="RHEA-COMP:10163"/>
        <dbReference type="ChEBI" id="CHEBI:15378"/>
        <dbReference type="ChEBI" id="CHEBI:73682"/>
        <dbReference type="ChEBI" id="CHEBI:74411"/>
        <dbReference type="ChEBI" id="CHEBI:74418"/>
        <dbReference type="ChEBI" id="CHEBI:456215"/>
        <dbReference type="EC" id="2.3.1.234"/>
    </reaction>
</comment>
<comment type="cofactor">
    <cofactor evidence="1">
        <name>a divalent metal cation</name>
        <dbReference type="ChEBI" id="CHEBI:60240"/>
    </cofactor>
    <text evidence="1">Binds 1 divalent metal cation per subunit.</text>
</comment>
<comment type="subunit">
    <text evidence="1">Component of the EKC/KEOPS complex composed of at least BUD32, CGI121, GON7, KAE1 and PCC1; the whole complex dimerizes.</text>
</comment>
<comment type="subcellular location">
    <subcellularLocation>
        <location evidence="1">Cytoplasm</location>
    </subcellularLocation>
    <subcellularLocation>
        <location evidence="1">Nucleus</location>
    </subcellularLocation>
</comment>
<comment type="similarity">
    <text evidence="1">Belongs to the KAE1 / TsaD family.</text>
</comment>
<keyword id="KW-0010">Activator</keyword>
<keyword id="KW-0012">Acyltransferase</keyword>
<keyword id="KW-0963">Cytoplasm</keyword>
<keyword id="KW-0479">Metal-binding</keyword>
<keyword id="KW-0539">Nucleus</keyword>
<keyword id="KW-1185">Reference proteome</keyword>
<keyword id="KW-0804">Transcription</keyword>
<keyword id="KW-0805">Transcription regulation</keyword>
<keyword id="KW-0808">Transferase</keyword>
<keyword id="KW-0819">tRNA processing</keyword>
<protein>
    <recommendedName>
        <fullName evidence="1">tRNA N6-adenosine threonylcarbamoyltransferase</fullName>
        <ecNumber evidence="1">2.3.1.234</ecNumber>
    </recommendedName>
    <alternativeName>
        <fullName>N6-L-threonylcarbamoyladenine synthase</fullName>
        <shortName>t(6)A synthase</shortName>
    </alternativeName>
    <alternativeName>
        <fullName evidence="1">t(6)A37 threonylcarbamoyladenosine biosynthesis protein KAE1</fullName>
    </alternativeName>
    <alternativeName>
        <fullName evidence="1">tRNA threonylcarbamoyladenosine biosynthesis protein KAE1</fullName>
    </alternativeName>
</protein>
<name>KAE1_ENCCU</name>
<accession>Q8SQQ3</accession>
<feature type="chain" id="PRO_0000278936" description="tRNA N6-adenosine threonylcarbamoyltransferase">
    <location>
        <begin position="1"/>
        <end position="331"/>
    </location>
</feature>
<feature type="binding site" evidence="1">
    <location>
        <position position="108"/>
    </location>
    <ligand>
        <name>a divalent metal cation</name>
        <dbReference type="ChEBI" id="CHEBI:60240"/>
    </ligand>
</feature>
<feature type="binding site" evidence="1">
    <location>
        <position position="112"/>
    </location>
    <ligand>
        <name>a divalent metal cation</name>
        <dbReference type="ChEBI" id="CHEBI:60240"/>
    </ligand>
</feature>
<feature type="binding site" evidence="1">
    <location>
        <begin position="129"/>
        <end position="133"/>
    </location>
    <ligand>
        <name>substrate</name>
    </ligand>
</feature>
<feature type="binding site" evidence="1">
    <location>
        <position position="129"/>
    </location>
    <ligand>
        <name>a divalent metal cation</name>
        <dbReference type="ChEBI" id="CHEBI:60240"/>
    </ligand>
</feature>
<feature type="binding site" evidence="1">
    <location>
        <position position="161"/>
    </location>
    <ligand>
        <name>substrate</name>
    </ligand>
</feature>
<feature type="binding site" evidence="1">
    <location>
        <position position="176"/>
    </location>
    <ligand>
        <name>substrate</name>
    </ligand>
</feature>
<feature type="binding site" evidence="1">
    <location>
        <position position="180"/>
    </location>
    <ligand>
        <name>substrate</name>
    </ligand>
</feature>
<feature type="binding site" evidence="1">
    <location>
        <position position="261"/>
    </location>
    <ligand>
        <name>substrate</name>
    </ligand>
</feature>
<feature type="binding site" evidence="1">
    <location>
        <position position="289"/>
    </location>
    <ligand>
        <name>a divalent metal cation</name>
        <dbReference type="ChEBI" id="CHEBI:60240"/>
    </ligand>
</feature>
<proteinExistence type="inferred from homology"/>
<organism>
    <name type="scientific">Encephalitozoon cuniculi (strain GB-M1)</name>
    <name type="common">Microsporidian parasite</name>
    <dbReference type="NCBI Taxonomy" id="284813"/>
    <lineage>
        <taxon>Eukaryota</taxon>
        <taxon>Fungi</taxon>
        <taxon>Fungi incertae sedis</taxon>
        <taxon>Microsporidia</taxon>
        <taxon>Unikaryonidae</taxon>
        <taxon>Encephalitozoon</taxon>
    </lineage>
</organism>
<gene>
    <name evidence="1" type="primary">KAE1</name>
    <name type="ordered locus">ECU09_0140</name>
</gene>
<evidence type="ECO:0000255" key="1">
    <source>
        <dbReference type="HAMAP-Rule" id="MF_03180"/>
    </source>
</evidence>
<reference key="1">
    <citation type="journal article" date="2001" name="Nature">
        <title>Genome sequence and gene compaction of the eukaryote parasite Encephalitozoon cuniculi.</title>
        <authorList>
            <person name="Katinka M.D."/>
            <person name="Duprat S."/>
            <person name="Cornillot E."/>
            <person name="Metenier G."/>
            <person name="Thomarat F."/>
            <person name="Prensier G."/>
            <person name="Barbe V."/>
            <person name="Peyretaillade E."/>
            <person name="Brottier P."/>
            <person name="Wincker P."/>
            <person name="Delbac F."/>
            <person name="El Alaoui H."/>
            <person name="Peyret P."/>
            <person name="Saurin W."/>
            <person name="Gouy M."/>
            <person name="Weissenbach J."/>
            <person name="Vivares C.P."/>
        </authorList>
    </citation>
    <scope>NUCLEOTIDE SEQUENCE [LARGE SCALE GENOMIC DNA]</scope>
    <source>
        <strain>GB-M1</strain>
    </source>
</reference>